<proteinExistence type="inferred from homology"/>
<dbReference type="EMBL" id="AE014299">
    <property type="protein sequence ID" value="AAN55928.2"/>
    <property type="molecule type" value="Genomic_DNA"/>
</dbReference>
<dbReference type="RefSeq" id="NP_718484.2">
    <property type="nucleotide sequence ID" value="NC_004347.2"/>
</dbReference>
<dbReference type="RefSeq" id="WP_011072819.1">
    <property type="nucleotide sequence ID" value="NC_004347.2"/>
</dbReference>
<dbReference type="STRING" id="211586.SO_2914"/>
<dbReference type="PaxDb" id="211586-SO_2914"/>
<dbReference type="KEGG" id="son:SO_2914"/>
<dbReference type="PATRIC" id="fig|211586.12.peg.2812"/>
<dbReference type="eggNOG" id="COG3092">
    <property type="taxonomic scope" value="Bacteria"/>
</dbReference>
<dbReference type="HOGENOM" id="CLU_128746_0_0_6"/>
<dbReference type="OrthoDB" id="7066670at2"/>
<dbReference type="PhylomeDB" id="Q8ED56"/>
<dbReference type="BioCyc" id="SONE211586:G1GMP-2688-MONOMER"/>
<dbReference type="Proteomes" id="UP000008186">
    <property type="component" value="Chromosome"/>
</dbReference>
<dbReference type="GO" id="GO:0005886">
    <property type="term" value="C:plasma membrane"/>
    <property type="evidence" value="ECO:0007669"/>
    <property type="project" value="UniProtKB-SubCell"/>
</dbReference>
<dbReference type="HAMAP" id="MF_01101">
    <property type="entry name" value="UPF0208"/>
    <property type="match status" value="1"/>
</dbReference>
<dbReference type="InterPro" id="IPR007334">
    <property type="entry name" value="UPF0208"/>
</dbReference>
<dbReference type="NCBIfam" id="NF002493">
    <property type="entry name" value="PRK01816.1"/>
    <property type="match status" value="1"/>
</dbReference>
<dbReference type="Pfam" id="PF04217">
    <property type="entry name" value="DUF412"/>
    <property type="match status" value="1"/>
</dbReference>
<gene>
    <name type="ordered locus">SO_2914</name>
</gene>
<sequence>MSINILKTLGDGRRYMKTWPMVRQLGLYFPEYRVVRATQLAILVMPVLAVLASVSQLYTYGWAFLPQALTIALFFISLPLQGLLWLGWRARHPLPLSLFDWSNQLSAKLTAMGIHCQSLGAKACYLDMALILKIAFERLDASYWEEL</sequence>
<accession>Q8ED56</accession>
<evidence type="ECO:0000255" key="1">
    <source>
        <dbReference type="HAMAP-Rule" id="MF_01101"/>
    </source>
</evidence>
<reference key="1">
    <citation type="journal article" date="2002" name="Nat. Biotechnol.">
        <title>Genome sequence of the dissimilatory metal ion-reducing bacterium Shewanella oneidensis.</title>
        <authorList>
            <person name="Heidelberg J.F."/>
            <person name="Paulsen I.T."/>
            <person name="Nelson K.E."/>
            <person name="Gaidos E.J."/>
            <person name="Nelson W.C."/>
            <person name="Read T.D."/>
            <person name="Eisen J.A."/>
            <person name="Seshadri R."/>
            <person name="Ward N.L."/>
            <person name="Methe B.A."/>
            <person name="Clayton R.A."/>
            <person name="Meyer T."/>
            <person name="Tsapin A."/>
            <person name="Scott J."/>
            <person name="Beanan M.J."/>
            <person name="Brinkac L.M."/>
            <person name="Daugherty S.C."/>
            <person name="DeBoy R.T."/>
            <person name="Dodson R.J."/>
            <person name="Durkin A.S."/>
            <person name="Haft D.H."/>
            <person name="Kolonay J.F."/>
            <person name="Madupu R."/>
            <person name="Peterson J.D."/>
            <person name="Umayam L.A."/>
            <person name="White O."/>
            <person name="Wolf A.M."/>
            <person name="Vamathevan J.J."/>
            <person name="Weidman J.F."/>
            <person name="Impraim M."/>
            <person name="Lee K."/>
            <person name="Berry K.J."/>
            <person name="Lee C."/>
            <person name="Mueller J."/>
            <person name="Khouri H.M."/>
            <person name="Gill J."/>
            <person name="Utterback T.R."/>
            <person name="McDonald L.A."/>
            <person name="Feldblyum T.V."/>
            <person name="Smith H.O."/>
            <person name="Venter J.C."/>
            <person name="Nealson K.H."/>
            <person name="Fraser C.M."/>
        </authorList>
    </citation>
    <scope>NUCLEOTIDE SEQUENCE [LARGE SCALE GENOMIC DNA]</scope>
    <source>
        <strain>ATCC 700550 / JCM 31522 / CIP 106686 / LMG 19005 / NCIMB 14063 / MR-1</strain>
    </source>
</reference>
<name>Y2914_SHEON</name>
<organism>
    <name type="scientific">Shewanella oneidensis (strain ATCC 700550 / JCM 31522 / CIP 106686 / LMG 19005 / NCIMB 14063 / MR-1)</name>
    <dbReference type="NCBI Taxonomy" id="211586"/>
    <lineage>
        <taxon>Bacteria</taxon>
        <taxon>Pseudomonadati</taxon>
        <taxon>Pseudomonadota</taxon>
        <taxon>Gammaproteobacteria</taxon>
        <taxon>Alteromonadales</taxon>
        <taxon>Shewanellaceae</taxon>
        <taxon>Shewanella</taxon>
    </lineage>
</organism>
<feature type="chain" id="PRO_0000080822" description="UPF0208 membrane protein SO_2914">
    <location>
        <begin position="1"/>
        <end position="147"/>
    </location>
</feature>
<feature type="transmembrane region" description="Helical" evidence="1">
    <location>
        <begin position="40"/>
        <end position="60"/>
    </location>
</feature>
<feature type="transmembrane region" description="Helical" evidence="1">
    <location>
        <begin position="68"/>
        <end position="88"/>
    </location>
</feature>
<comment type="subcellular location">
    <subcellularLocation>
        <location evidence="1">Cell inner membrane</location>
        <topology evidence="1">Multi-pass membrane protein</topology>
    </subcellularLocation>
</comment>
<comment type="similarity">
    <text evidence="1">Belongs to the UPF0208 family.</text>
</comment>
<protein>
    <recommendedName>
        <fullName evidence="1">UPF0208 membrane protein SO_2914</fullName>
    </recommendedName>
</protein>
<keyword id="KW-0997">Cell inner membrane</keyword>
<keyword id="KW-1003">Cell membrane</keyword>
<keyword id="KW-0472">Membrane</keyword>
<keyword id="KW-1185">Reference proteome</keyword>
<keyword id="KW-0812">Transmembrane</keyword>
<keyword id="KW-1133">Transmembrane helix</keyword>